<keyword id="KW-0687">Ribonucleoprotein</keyword>
<keyword id="KW-0689">Ribosomal protein</keyword>
<keyword id="KW-0694">RNA-binding</keyword>
<keyword id="KW-0699">rRNA-binding</keyword>
<feature type="chain" id="PRO_1000166840" description="Large ribosomal subunit protein uL6">
    <location>
        <begin position="1"/>
        <end position="177"/>
    </location>
</feature>
<dbReference type="EMBL" id="CP001233">
    <property type="protein sequence ID" value="ACP06798.1"/>
    <property type="molecule type" value="Genomic_DNA"/>
</dbReference>
<dbReference type="RefSeq" id="WP_000091929.1">
    <property type="nucleotide sequence ID" value="NC_012578.1"/>
</dbReference>
<dbReference type="SMR" id="C3LRP3"/>
<dbReference type="GeneID" id="69718815"/>
<dbReference type="KEGG" id="vcm:VCM66_2501"/>
<dbReference type="HOGENOM" id="CLU_065464_1_2_6"/>
<dbReference type="Proteomes" id="UP000001217">
    <property type="component" value="Chromosome I"/>
</dbReference>
<dbReference type="GO" id="GO:0022625">
    <property type="term" value="C:cytosolic large ribosomal subunit"/>
    <property type="evidence" value="ECO:0007669"/>
    <property type="project" value="TreeGrafter"/>
</dbReference>
<dbReference type="GO" id="GO:0019843">
    <property type="term" value="F:rRNA binding"/>
    <property type="evidence" value="ECO:0007669"/>
    <property type="project" value="UniProtKB-UniRule"/>
</dbReference>
<dbReference type="GO" id="GO:0003735">
    <property type="term" value="F:structural constituent of ribosome"/>
    <property type="evidence" value="ECO:0007669"/>
    <property type="project" value="InterPro"/>
</dbReference>
<dbReference type="GO" id="GO:0002181">
    <property type="term" value="P:cytoplasmic translation"/>
    <property type="evidence" value="ECO:0007669"/>
    <property type="project" value="TreeGrafter"/>
</dbReference>
<dbReference type="FunFam" id="3.90.930.12:FF:000001">
    <property type="entry name" value="50S ribosomal protein L6"/>
    <property type="match status" value="1"/>
</dbReference>
<dbReference type="FunFam" id="3.90.930.12:FF:000002">
    <property type="entry name" value="50S ribosomal protein L6"/>
    <property type="match status" value="1"/>
</dbReference>
<dbReference type="Gene3D" id="3.90.930.12">
    <property type="entry name" value="Ribosomal protein L6, alpha-beta domain"/>
    <property type="match status" value="2"/>
</dbReference>
<dbReference type="HAMAP" id="MF_01365_B">
    <property type="entry name" value="Ribosomal_uL6_B"/>
    <property type="match status" value="1"/>
</dbReference>
<dbReference type="InterPro" id="IPR000702">
    <property type="entry name" value="Ribosomal_uL6-like"/>
</dbReference>
<dbReference type="InterPro" id="IPR036789">
    <property type="entry name" value="Ribosomal_uL6-like_a/b-dom_sf"/>
</dbReference>
<dbReference type="InterPro" id="IPR020040">
    <property type="entry name" value="Ribosomal_uL6_a/b-dom"/>
</dbReference>
<dbReference type="InterPro" id="IPR019906">
    <property type="entry name" value="Ribosomal_uL6_bac-type"/>
</dbReference>
<dbReference type="InterPro" id="IPR002358">
    <property type="entry name" value="Ribosomal_uL6_CS"/>
</dbReference>
<dbReference type="NCBIfam" id="TIGR03654">
    <property type="entry name" value="L6_bact"/>
    <property type="match status" value="1"/>
</dbReference>
<dbReference type="PANTHER" id="PTHR11655">
    <property type="entry name" value="60S/50S RIBOSOMAL PROTEIN L6/L9"/>
    <property type="match status" value="1"/>
</dbReference>
<dbReference type="PANTHER" id="PTHR11655:SF14">
    <property type="entry name" value="LARGE RIBOSOMAL SUBUNIT PROTEIN UL6M"/>
    <property type="match status" value="1"/>
</dbReference>
<dbReference type="Pfam" id="PF00347">
    <property type="entry name" value="Ribosomal_L6"/>
    <property type="match status" value="2"/>
</dbReference>
<dbReference type="PIRSF" id="PIRSF002162">
    <property type="entry name" value="Ribosomal_L6"/>
    <property type="match status" value="1"/>
</dbReference>
<dbReference type="PRINTS" id="PR00059">
    <property type="entry name" value="RIBOSOMALL6"/>
</dbReference>
<dbReference type="SUPFAM" id="SSF56053">
    <property type="entry name" value="Ribosomal protein L6"/>
    <property type="match status" value="2"/>
</dbReference>
<dbReference type="PROSITE" id="PS00525">
    <property type="entry name" value="RIBOSOMAL_L6_1"/>
    <property type="match status" value="1"/>
</dbReference>
<gene>
    <name evidence="1" type="primary">rplF</name>
    <name type="ordered locus">VCM66_2501</name>
</gene>
<proteinExistence type="inferred from homology"/>
<sequence length="177" mass="18808">MSRVAKAPVAIPAGVEVKLNGQEITIKGAKGELTRVFHNGVVIAQEDNQLTFGPREGVANAWAQAGTARALVKNMVVGVTEGFTKKLVLKGVGYRAAMKGNAVGLTLGFSHPVEHELPAGVKAECPSQTEIVLTGCDKQVVGQVAADIRSYRAPEPYKGKGIRYADENVRSKEAKKK</sequence>
<evidence type="ECO:0000255" key="1">
    <source>
        <dbReference type="HAMAP-Rule" id="MF_01365"/>
    </source>
</evidence>
<evidence type="ECO:0000305" key="2"/>
<reference key="1">
    <citation type="journal article" date="2008" name="PLoS ONE">
        <title>A recalibrated molecular clock and independent origins for the cholera pandemic clones.</title>
        <authorList>
            <person name="Feng L."/>
            <person name="Reeves P.R."/>
            <person name="Lan R."/>
            <person name="Ren Y."/>
            <person name="Gao C."/>
            <person name="Zhou Z."/>
            <person name="Ren Y."/>
            <person name="Cheng J."/>
            <person name="Wang W."/>
            <person name="Wang J."/>
            <person name="Qian W."/>
            <person name="Li D."/>
            <person name="Wang L."/>
        </authorList>
    </citation>
    <scope>NUCLEOTIDE SEQUENCE [LARGE SCALE GENOMIC DNA]</scope>
    <source>
        <strain>M66-2</strain>
    </source>
</reference>
<protein>
    <recommendedName>
        <fullName evidence="1">Large ribosomal subunit protein uL6</fullName>
    </recommendedName>
    <alternativeName>
        <fullName evidence="2">50S ribosomal protein L6</fullName>
    </alternativeName>
</protein>
<accession>C3LRP3</accession>
<organism>
    <name type="scientific">Vibrio cholerae serotype O1 (strain M66-2)</name>
    <dbReference type="NCBI Taxonomy" id="579112"/>
    <lineage>
        <taxon>Bacteria</taxon>
        <taxon>Pseudomonadati</taxon>
        <taxon>Pseudomonadota</taxon>
        <taxon>Gammaproteobacteria</taxon>
        <taxon>Vibrionales</taxon>
        <taxon>Vibrionaceae</taxon>
        <taxon>Vibrio</taxon>
    </lineage>
</organism>
<comment type="function">
    <text evidence="1">This protein binds to the 23S rRNA, and is important in its secondary structure. It is located near the subunit interface in the base of the L7/L12 stalk, and near the tRNA binding site of the peptidyltransferase center.</text>
</comment>
<comment type="subunit">
    <text evidence="1">Part of the 50S ribosomal subunit.</text>
</comment>
<comment type="similarity">
    <text evidence="1">Belongs to the universal ribosomal protein uL6 family.</text>
</comment>
<name>RL6_VIBCM</name>